<proteinExistence type="inferred from homology"/>
<accession>Q87PC5</accession>
<evidence type="ECO:0000255" key="1">
    <source>
        <dbReference type="HAMAP-Rule" id="MF_00405"/>
    </source>
</evidence>
<name>FABA_VIBPA</name>
<comment type="function">
    <text evidence="1">Necessary for the introduction of cis unsaturation into fatty acids. Catalyzes the dehydration of (3R)-3-hydroxydecanoyl-ACP to E-(2)-decenoyl-ACP and then its isomerization to Z-(3)-decenoyl-ACP. Can catalyze the dehydratase reaction for beta-hydroxyacyl-ACPs with saturated chain lengths up to 16:0, being most active on intermediate chain length.</text>
</comment>
<comment type="catalytic activity">
    <reaction evidence="1">
        <text>a (3R)-hydroxyacyl-[ACP] = a (2E)-enoyl-[ACP] + H2O</text>
        <dbReference type="Rhea" id="RHEA:13097"/>
        <dbReference type="Rhea" id="RHEA-COMP:9925"/>
        <dbReference type="Rhea" id="RHEA-COMP:9945"/>
        <dbReference type="ChEBI" id="CHEBI:15377"/>
        <dbReference type="ChEBI" id="CHEBI:78784"/>
        <dbReference type="ChEBI" id="CHEBI:78827"/>
        <dbReference type="EC" id="4.2.1.59"/>
    </reaction>
</comment>
<comment type="catalytic activity">
    <reaction evidence="1">
        <text>(3R)-hydroxydecanoyl-[ACP] = (2E)-decenoyl-[ACP] + H2O</text>
        <dbReference type="Rhea" id="RHEA:41860"/>
        <dbReference type="Rhea" id="RHEA-COMP:9638"/>
        <dbReference type="Rhea" id="RHEA-COMP:9639"/>
        <dbReference type="ChEBI" id="CHEBI:15377"/>
        <dbReference type="ChEBI" id="CHEBI:78466"/>
        <dbReference type="ChEBI" id="CHEBI:78467"/>
    </reaction>
</comment>
<comment type="catalytic activity">
    <reaction evidence="1">
        <text>(2E)-decenoyl-[ACP] = (3Z)-decenoyl-[ACP]</text>
        <dbReference type="Rhea" id="RHEA:23568"/>
        <dbReference type="Rhea" id="RHEA-COMP:9639"/>
        <dbReference type="Rhea" id="RHEA-COMP:9927"/>
        <dbReference type="ChEBI" id="CHEBI:78467"/>
        <dbReference type="ChEBI" id="CHEBI:78798"/>
        <dbReference type="EC" id="5.3.3.14"/>
    </reaction>
</comment>
<comment type="pathway">
    <text evidence="1">Lipid metabolism; fatty acid biosynthesis.</text>
</comment>
<comment type="subunit">
    <text evidence="1">Homodimer.</text>
</comment>
<comment type="subcellular location">
    <subcellularLocation>
        <location evidence="1">Cytoplasm</location>
    </subcellularLocation>
</comment>
<comment type="similarity">
    <text evidence="1">Belongs to the thioester dehydratase family. FabA subfamily.</text>
</comment>
<protein>
    <recommendedName>
        <fullName evidence="1">3-hydroxydecanoyl-[acyl-carrier-protein] dehydratase</fullName>
        <ecNumber evidence="1">4.2.1.59</ecNumber>
    </recommendedName>
    <alternativeName>
        <fullName evidence="1">3-hydroxyacyl-[acyl-carrier-protein] dehydratase FabA</fullName>
    </alternativeName>
    <alternativeName>
        <fullName evidence="1">Beta-hydroxydecanoyl thioester dehydrase</fullName>
    </alternativeName>
    <alternativeName>
        <fullName evidence="1">Trans-2-decenoyl-[acyl-carrier-protein] isomerase</fullName>
        <ecNumber evidence="1">5.3.3.14</ecNumber>
    </alternativeName>
</protein>
<organism>
    <name type="scientific">Vibrio parahaemolyticus serotype O3:K6 (strain RIMD 2210633)</name>
    <dbReference type="NCBI Taxonomy" id="223926"/>
    <lineage>
        <taxon>Bacteria</taxon>
        <taxon>Pseudomonadati</taxon>
        <taxon>Pseudomonadota</taxon>
        <taxon>Gammaproteobacteria</taxon>
        <taxon>Vibrionales</taxon>
        <taxon>Vibrionaceae</taxon>
        <taxon>Vibrio</taxon>
    </lineage>
</organism>
<dbReference type="EC" id="4.2.1.59" evidence="1"/>
<dbReference type="EC" id="5.3.3.14" evidence="1"/>
<dbReference type="EMBL" id="BA000031">
    <property type="protein sequence ID" value="BAC59855.1"/>
    <property type="molecule type" value="Genomic_DNA"/>
</dbReference>
<dbReference type="RefSeq" id="NP_797971.1">
    <property type="nucleotide sequence ID" value="NC_004603.1"/>
</dbReference>
<dbReference type="RefSeq" id="WP_005390081.1">
    <property type="nucleotide sequence ID" value="NC_004603.1"/>
</dbReference>
<dbReference type="SMR" id="Q87PC5"/>
<dbReference type="GeneID" id="83581831"/>
<dbReference type="KEGG" id="vpa:VP1591"/>
<dbReference type="PATRIC" id="fig|223926.6.peg.1517"/>
<dbReference type="eggNOG" id="COG0764">
    <property type="taxonomic scope" value="Bacteria"/>
</dbReference>
<dbReference type="HOGENOM" id="CLU_097925_0_0_6"/>
<dbReference type="UniPathway" id="UPA00094"/>
<dbReference type="Proteomes" id="UP000002493">
    <property type="component" value="Chromosome 1"/>
</dbReference>
<dbReference type="GO" id="GO:0005737">
    <property type="term" value="C:cytoplasm"/>
    <property type="evidence" value="ECO:0007669"/>
    <property type="project" value="UniProtKB-SubCell"/>
</dbReference>
<dbReference type="GO" id="GO:0019171">
    <property type="term" value="F:(3R)-hydroxyacyl-[acyl-carrier-protein] dehydratase activity"/>
    <property type="evidence" value="ECO:0007669"/>
    <property type="project" value="UniProtKB-UniRule"/>
</dbReference>
<dbReference type="GO" id="GO:0034017">
    <property type="term" value="F:trans-2-decenoyl-acyl-carrier-protein isomerase activity"/>
    <property type="evidence" value="ECO:0007669"/>
    <property type="project" value="UniProtKB-UniRule"/>
</dbReference>
<dbReference type="GO" id="GO:0006636">
    <property type="term" value="P:unsaturated fatty acid biosynthetic process"/>
    <property type="evidence" value="ECO:0007669"/>
    <property type="project" value="UniProtKB-UniRule"/>
</dbReference>
<dbReference type="CDD" id="cd01287">
    <property type="entry name" value="FabA"/>
    <property type="match status" value="1"/>
</dbReference>
<dbReference type="FunFam" id="3.10.129.10:FF:000003">
    <property type="entry name" value="3-hydroxydecanoyl-[acyl-carrier-protein] dehydratase"/>
    <property type="match status" value="1"/>
</dbReference>
<dbReference type="Gene3D" id="3.10.129.10">
    <property type="entry name" value="Hotdog Thioesterase"/>
    <property type="match status" value="1"/>
</dbReference>
<dbReference type="HAMAP" id="MF_00405">
    <property type="entry name" value="FabA"/>
    <property type="match status" value="1"/>
</dbReference>
<dbReference type="InterPro" id="IPR010083">
    <property type="entry name" value="FabA"/>
</dbReference>
<dbReference type="InterPro" id="IPR013114">
    <property type="entry name" value="FabA_FabZ"/>
</dbReference>
<dbReference type="InterPro" id="IPR029069">
    <property type="entry name" value="HotDog_dom_sf"/>
</dbReference>
<dbReference type="NCBIfam" id="TIGR01749">
    <property type="entry name" value="fabA"/>
    <property type="match status" value="1"/>
</dbReference>
<dbReference type="NCBIfam" id="NF003509">
    <property type="entry name" value="PRK05174.1"/>
    <property type="match status" value="1"/>
</dbReference>
<dbReference type="PANTHER" id="PTHR30272">
    <property type="entry name" value="3-HYDROXYACYL-[ACYL-CARRIER-PROTEIN] DEHYDRATASE"/>
    <property type="match status" value="1"/>
</dbReference>
<dbReference type="PANTHER" id="PTHR30272:SF8">
    <property type="entry name" value="3-HYDROXYDECANOYL-[ACYL-CARRIER-PROTEIN] DEHYDRATASE"/>
    <property type="match status" value="1"/>
</dbReference>
<dbReference type="Pfam" id="PF07977">
    <property type="entry name" value="FabA"/>
    <property type="match status" value="1"/>
</dbReference>
<dbReference type="SUPFAM" id="SSF54637">
    <property type="entry name" value="Thioesterase/thiol ester dehydrase-isomerase"/>
    <property type="match status" value="1"/>
</dbReference>
<gene>
    <name evidence="1" type="primary">fabA</name>
    <name type="ordered locus">VP1591</name>
</gene>
<reference key="1">
    <citation type="journal article" date="2003" name="Lancet">
        <title>Genome sequence of Vibrio parahaemolyticus: a pathogenic mechanism distinct from that of V. cholerae.</title>
        <authorList>
            <person name="Makino K."/>
            <person name="Oshima K."/>
            <person name="Kurokawa K."/>
            <person name="Yokoyama K."/>
            <person name="Uda T."/>
            <person name="Tagomori K."/>
            <person name="Iijima Y."/>
            <person name="Najima M."/>
            <person name="Nakano M."/>
            <person name="Yamashita A."/>
            <person name="Kubota Y."/>
            <person name="Kimura S."/>
            <person name="Yasunaga T."/>
            <person name="Honda T."/>
            <person name="Shinagawa H."/>
            <person name="Hattori M."/>
            <person name="Iida T."/>
        </authorList>
    </citation>
    <scope>NUCLEOTIDE SEQUENCE [LARGE SCALE GENOMIC DNA]</scope>
    <source>
        <strain>RIMD 2210633</strain>
    </source>
</reference>
<sequence>MQNKRDSYNRDDLLASSQGELFGPGYPQLPAPNMLMMDRVTKMSETEGDFGKGLILAELDITPDLWFFDCHFPGDPVMPGCLGLDAMWQLVGFFLGWVGGKGKGRALGVGEVKFTGQILPTAKKVTYEIHMKRVVNRKLVMGLADGRVCVDGKEIYVAKDLKVGLFQDTSSF</sequence>
<feature type="chain" id="PRO_0000091618" description="3-hydroxydecanoyl-[acyl-carrier-protein] dehydratase">
    <location>
        <begin position="1"/>
        <end position="172"/>
    </location>
</feature>
<feature type="active site" evidence="1">
    <location>
        <position position="71"/>
    </location>
</feature>
<keyword id="KW-0963">Cytoplasm</keyword>
<keyword id="KW-0275">Fatty acid biosynthesis</keyword>
<keyword id="KW-0276">Fatty acid metabolism</keyword>
<keyword id="KW-0413">Isomerase</keyword>
<keyword id="KW-0444">Lipid biosynthesis</keyword>
<keyword id="KW-0443">Lipid metabolism</keyword>
<keyword id="KW-0456">Lyase</keyword>